<organism>
    <name type="scientific">Clostridium novyi (strain NT)</name>
    <dbReference type="NCBI Taxonomy" id="386415"/>
    <lineage>
        <taxon>Bacteria</taxon>
        <taxon>Bacillati</taxon>
        <taxon>Bacillota</taxon>
        <taxon>Clostridia</taxon>
        <taxon>Eubacteriales</taxon>
        <taxon>Clostridiaceae</taxon>
        <taxon>Clostridium</taxon>
    </lineage>
</organism>
<evidence type="ECO:0000255" key="1">
    <source>
        <dbReference type="HAMAP-Rule" id="MF_01633"/>
    </source>
</evidence>
<feature type="chain" id="PRO_0000336909" description="7-cyano-7-deazaguanine synthase">
    <location>
        <begin position="1"/>
        <end position="221"/>
    </location>
</feature>
<feature type="binding site" evidence="1">
    <location>
        <begin position="12"/>
        <end position="22"/>
    </location>
    <ligand>
        <name>ATP</name>
        <dbReference type="ChEBI" id="CHEBI:30616"/>
    </ligand>
</feature>
<feature type="binding site" evidence="1">
    <location>
        <position position="190"/>
    </location>
    <ligand>
        <name>Zn(2+)</name>
        <dbReference type="ChEBI" id="CHEBI:29105"/>
    </ligand>
</feature>
<feature type="binding site" evidence="1">
    <location>
        <position position="199"/>
    </location>
    <ligand>
        <name>Zn(2+)</name>
        <dbReference type="ChEBI" id="CHEBI:29105"/>
    </ligand>
</feature>
<feature type="binding site" evidence="1">
    <location>
        <position position="202"/>
    </location>
    <ligand>
        <name>Zn(2+)</name>
        <dbReference type="ChEBI" id="CHEBI:29105"/>
    </ligand>
</feature>
<feature type="binding site" evidence="1">
    <location>
        <position position="205"/>
    </location>
    <ligand>
        <name>Zn(2+)</name>
        <dbReference type="ChEBI" id="CHEBI:29105"/>
    </ligand>
</feature>
<dbReference type="EC" id="6.3.4.20" evidence="1"/>
<dbReference type="EMBL" id="CP000382">
    <property type="protein sequence ID" value="ABK60353.1"/>
    <property type="molecule type" value="Genomic_DNA"/>
</dbReference>
<dbReference type="SMR" id="A0Q1F7"/>
<dbReference type="STRING" id="386415.NT01CX_2386"/>
<dbReference type="KEGG" id="cno:NT01CX_2386"/>
<dbReference type="eggNOG" id="COG0603">
    <property type="taxonomic scope" value="Bacteria"/>
</dbReference>
<dbReference type="HOGENOM" id="CLU_081854_0_0_9"/>
<dbReference type="UniPathway" id="UPA00391"/>
<dbReference type="Proteomes" id="UP000008220">
    <property type="component" value="Chromosome"/>
</dbReference>
<dbReference type="GO" id="GO:0005524">
    <property type="term" value="F:ATP binding"/>
    <property type="evidence" value="ECO:0007669"/>
    <property type="project" value="UniProtKB-UniRule"/>
</dbReference>
<dbReference type="GO" id="GO:0016879">
    <property type="term" value="F:ligase activity, forming carbon-nitrogen bonds"/>
    <property type="evidence" value="ECO:0007669"/>
    <property type="project" value="UniProtKB-UniRule"/>
</dbReference>
<dbReference type="GO" id="GO:0008270">
    <property type="term" value="F:zinc ion binding"/>
    <property type="evidence" value="ECO:0007669"/>
    <property type="project" value="UniProtKB-UniRule"/>
</dbReference>
<dbReference type="GO" id="GO:0008616">
    <property type="term" value="P:queuosine biosynthetic process"/>
    <property type="evidence" value="ECO:0007669"/>
    <property type="project" value="UniProtKB-UniRule"/>
</dbReference>
<dbReference type="CDD" id="cd01995">
    <property type="entry name" value="QueC-like"/>
    <property type="match status" value="1"/>
</dbReference>
<dbReference type="FunFam" id="3.40.50.620:FF:000017">
    <property type="entry name" value="7-cyano-7-deazaguanine synthase"/>
    <property type="match status" value="1"/>
</dbReference>
<dbReference type="Gene3D" id="3.40.50.620">
    <property type="entry name" value="HUPs"/>
    <property type="match status" value="1"/>
</dbReference>
<dbReference type="HAMAP" id="MF_01633">
    <property type="entry name" value="QueC"/>
    <property type="match status" value="1"/>
</dbReference>
<dbReference type="InterPro" id="IPR018317">
    <property type="entry name" value="QueC"/>
</dbReference>
<dbReference type="InterPro" id="IPR014729">
    <property type="entry name" value="Rossmann-like_a/b/a_fold"/>
</dbReference>
<dbReference type="NCBIfam" id="TIGR00364">
    <property type="entry name" value="7-cyano-7-deazaguanine synthase QueC"/>
    <property type="match status" value="1"/>
</dbReference>
<dbReference type="PANTHER" id="PTHR42914">
    <property type="entry name" value="7-CYANO-7-DEAZAGUANINE SYNTHASE"/>
    <property type="match status" value="1"/>
</dbReference>
<dbReference type="PANTHER" id="PTHR42914:SF1">
    <property type="entry name" value="7-CYANO-7-DEAZAGUANINE SYNTHASE"/>
    <property type="match status" value="1"/>
</dbReference>
<dbReference type="Pfam" id="PF06508">
    <property type="entry name" value="QueC"/>
    <property type="match status" value="1"/>
</dbReference>
<dbReference type="PIRSF" id="PIRSF006293">
    <property type="entry name" value="ExsB"/>
    <property type="match status" value="1"/>
</dbReference>
<dbReference type="SUPFAM" id="SSF52402">
    <property type="entry name" value="Adenine nucleotide alpha hydrolases-like"/>
    <property type="match status" value="1"/>
</dbReference>
<keyword id="KW-0067">ATP-binding</keyword>
<keyword id="KW-0436">Ligase</keyword>
<keyword id="KW-0479">Metal-binding</keyword>
<keyword id="KW-0547">Nucleotide-binding</keyword>
<keyword id="KW-0671">Queuosine biosynthesis</keyword>
<keyword id="KW-1185">Reference proteome</keyword>
<keyword id="KW-0862">Zinc</keyword>
<name>QUEC_CLONN</name>
<accession>A0Q1F7</accession>
<reference key="1">
    <citation type="journal article" date="2006" name="Nat. Biotechnol.">
        <title>The genome and transcriptomes of the anti-tumor agent Clostridium novyi-NT.</title>
        <authorList>
            <person name="Bettegowda C."/>
            <person name="Huang X."/>
            <person name="Lin J."/>
            <person name="Cheong I."/>
            <person name="Kohli M."/>
            <person name="Szabo S.A."/>
            <person name="Zhang X."/>
            <person name="Diaz L.A. Jr."/>
            <person name="Velculescu V.E."/>
            <person name="Parmigiani G."/>
            <person name="Kinzler K.W."/>
            <person name="Vogelstein B."/>
            <person name="Zhou S."/>
        </authorList>
    </citation>
    <scope>NUCLEOTIDE SEQUENCE [LARGE SCALE GENOMIC DNA]</scope>
    <source>
        <strain>NT</strain>
    </source>
</reference>
<gene>
    <name evidence="1" type="primary">queC</name>
    <name type="ordered locus">NT01CX_2386</name>
</gene>
<sequence>MSINNEKAIVVFSGGQDSTTCLFWTKKRFKEVIAVSFDYNQKHKLELECAKEICSKYNIEHHILDLGLLNQLAPNSLTRTDIKVDKNAPEDGVPNSFVDGRNMLFLTFVAVFAKQRGISHIITGVSQSDFSGYPDCRDVFIKSLNVTLNLAMDYEFVLHTPLMWIDKAETWKMAYDFGVLDIIKNETLTCYNGIKGNGCGECPSCKLRKKGYLKFKELYMK</sequence>
<protein>
    <recommendedName>
        <fullName evidence="1">7-cyano-7-deazaguanine synthase</fullName>
        <ecNumber evidence="1">6.3.4.20</ecNumber>
    </recommendedName>
    <alternativeName>
        <fullName evidence="1">7-cyano-7-carbaguanine synthase</fullName>
    </alternativeName>
    <alternativeName>
        <fullName evidence="1">PreQ(0) synthase</fullName>
    </alternativeName>
    <alternativeName>
        <fullName evidence="1">Queuosine biosynthesis protein QueC</fullName>
    </alternativeName>
</protein>
<proteinExistence type="inferred from homology"/>
<comment type="function">
    <text evidence="1">Catalyzes the ATP-dependent conversion of 7-carboxy-7-deazaguanine (CDG) to 7-cyano-7-deazaguanine (preQ(0)).</text>
</comment>
<comment type="catalytic activity">
    <reaction evidence="1">
        <text>7-carboxy-7-deazaguanine + NH4(+) + ATP = 7-cyano-7-deazaguanine + ADP + phosphate + H2O + H(+)</text>
        <dbReference type="Rhea" id="RHEA:27982"/>
        <dbReference type="ChEBI" id="CHEBI:15377"/>
        <dbReference type="ChEBI" id="CHEBI:15378"/>
        <dbReference type="ChEBI" id="CHEBI:28938"/>
        <dbReference type="ChEBI" id="CHEBI:30616"/>
        <dbReference type="ChEBI" id="CHEBI:43474"/>
        <dbReference type="ChEBI" id="CHEBI:45075"/>
        <dbReference type="ChEBI" id="CHEBI:61036"/>
        <dbReference type="ChEBI" id="CHEBI:456216"/>
        <dbReference type="EC" id="6.3.4.20"/>
    </reaction>
</comment>
<comment type="cofactor">
    <cofactor evidence="1">
        <name>Zn(2+)</name>
        <dbReference type="ChEBI" id="CHEBI:29105"/>
    </cofactor>
    <text evidence="1">Binds 1 zinc ion per subunit.</text>
</comment>
<comment type="pathway">
    <text evidence="1">Purine metabolism; 7-cyano-7-deazaguanine biosynthesis.</text>
</comment>
<comment type="subunit">
    <text evidence="1">Homodimer.</text>
</comment>
<comment type="similarity">
    <text evidence="1">Belongs to the QueC family.</text>
</comment>